<comment type="function">
    <text evidence="1 2 7 8 10">Synaptotagmin family member involved in vesicular and membrane trafficking which does not bind Ca(2+) (PubMed:9162066). Inhibits clathrin-mediated and bulk endocytosis in neurons, functions to ensure precision in vesicle retrieval (PubMed:26589353, PubMed:29311685). Plays an important role in dopamine transmission by regulating endocytosis and the vesicle-recycling process (PubMed:29311685). Essential component of a neuronal vesicular trafficking pathway that differs from the synaptic vesicle trafficking pathway but is crucial for development and synaptic plasticity. In macrophages and microglia, inhibits the conventional cytokine secretion, of at least IL6 and TNF, and phagocytosis. In astrocytes, regulates lysosome exocytosis, mechanism required for the repair of injured astrocyte cell membrane (By similarity). Required for the ATP13A2-mediated regulation of the autophagy-lysosome pathway (By similarity).</text>
</comment>
<comment type="cofactor">
    <cofactor evidence="4">
        <name>Ca(2+)</name>
        <dbReference type="ChEBI" id="CHEBI:29108"/>
    </cofactor>
</comment>
<comment type="subunit">
    <text evidence="1 6 9">Homodimer. Can also form heterodimers. Interacts with PRKN (By similarity). Interacts (via C2 2 domain) with AGO2 and SND1; the interaction with SND1 is direct (PubMed:24882364). Interacts with KIF1A; the interaction increases in presence of calcium (PubMed:30021165).</text>
</comment>
<comment type="subcellular location">
    <subcellularLocation>
        <location evidence="2">Cytoplasmic vesicle membrane</location>
        <topology evidence="11">Single-pass membrane protein</topology>
    </subcellularLocation>
    <subcellularLocation>
        <location evidence="2">Perikaryon</location>
    </subcellularLocation>
    <subcellularLocation>
        <location evidence="2">Golgi apparatus</location>
        <location evidence="2">trans-Golgi network membrane</location>
        <topology evidence="2">Single-pass membrane protein</topology>
    </subcellularLocation>
    <subcellularLocation>
        <location evidence="7">Recycling endosome membrane</location>
        <topology evidence="11">Single-pass membrane protein</topology>
    </subcellularLocation>
    <subcellularLocation>
        <location evidence="2">Lysosome membrane</location>
        <topology evidence="2">Single-pass membrane protein</topology>
    </subcellularLocation>
    <subcellularLocation>
        <location evidence="2">Cytoplasmic vesicle</location>
        <location evidence="2">Phagosome</location>
    </subcellularLocation>
    <subcellularLocation>
        <location evidence="7">Cell projection</location>
        <location evidence="7">Axon</location>
    </subcellularLocation>
    <subcellularLocation>
        <location evidence="2">Cell projection</location>
        <location evidence="2">Dendrite</location>
    </subcellularLocation>
    <subcellularLocation>
        <location evidence="2">Postsynaptic density</location>
    </subcellularLocation>
    <subcellularLocation>
        <location evidence="7">Cytoplasmic vesicle</location>
        <location evidence="7">Clathrin-coated vesicle membrane</location>
        <topology evidence="11">Single-pass membrane protein</topology>
    </subcellularLocation>
    <subcellularLocation>
        <location evidence="7">Perikaryon</location>
    </subcellularLocation>
    <text evidence="2">Localized in vesicles that travels in axonal and dendritic shafts in both anterograde and retrograde directions. In macrophages and microglia, recruited in phagosomes at early stages of phagocytosis.</text>
</comment>
<comment type="tissue specificity">
    <text evidence="10">Highly expressed in brain and at lower levels in other tissues.</text>
</comment>
<comment type="domain">
    <text evidence="7 8">The second C2 domain/C2B is required for the inhibitory role in both clathrin-mediated and bulk endocytosis (PubMed:26589353, PubMed:29311685). The transmembrane domain and the first C2 domain/C2A are critical for the inhibitory role in clathrin-mediated endocytosis or bulk endocytosis, respectively (PubMed:26589353).</text>
</comment>
<comment type="domain">
    <text evidence="10">Unlike in other synaptotagmin family members, the first C2 domain/C2A does not bind Ca(2+) neither mediates Ca(2+)-dependent phospholipid binding. An aspartate-to-serine substitution in this domain inactivates Ca(2+)/phospho-lipid binding.</text>
</comment>
<comment type="PTM">
    <text evidence="1 8">Ubiquitinated, at least by PRKN, and targeted to the proteasome complex for degradation (PubMed:29311685). Ubiquitination is inhibited by ATP13A2 (By similarity).</text>
</comment>
<comment type="similarity">
    <text evidence="11">Belongs to the synaptotagmin family.</text>
</comment>
<gene>
    <name evidence="12" type="primary">Syt11</name>
</gene>
<reference key="1">
    <citation type="journal article" date="1997" name="J. Biol. Chem.">
        <title>The evolutionary pressure to inactivate. A subclass of synaptotagmins with an amino acid substitution that abolishes Ca2+ binding.</title>
        <authorList>
            <person name="von Poser C."/>
            <person name="Ichtchenko K."/>
            <person name="Shao X."/>
            <person name="Rizo J."/>
            <person name="Suedhof T.C."/>
        </authorList>
    </citation>
    <scope>NUCLEOTIDE SEQUENCE [MRNA]</scope>
    <scope>TISSUE SPECIFICITY</scope>
    <scope>MUTAGENESIS OF SER-247</scope>
    <scope>FUNCTION</scope>
    <source>
        <tissue>Brain</tissue>
    </source>
</reference>
<reference key="2">
    <citation type="submission" date="2001-05" db="EMBL/GenBank/DDBJ databases">
        <authorList>
            <person name="Shin O.-H."/>
            <person name="von Poser C."/>
            <person name="Ichtchenko K."/>
            <person name="Shao X."/>
            <person name="Rizo J."/>
            <person name="Suedhof T.C."/>
        </authorList>
    </citation>
    <scope>NUCLEOTIDE SEQUENCE [MRNA]</scope>
</reference>
<reference key="3">
    <citation type="journal article" date="2014" name="FEBS Lett.">
        <title>Synaptotagmin 11 interacts with components of the RNA-induced silencing complex RISC in clonal pancreatic beta-cells.</title>
        <authorList>
            <person name="Milochau A."/>
            <person name="Lagree V."/>
            <person name="Benassy M.N."/>
            <person name="Chaignepain S."/>
            <person name="Papin J."/>
            <person name="Garcia-Arcos I."/>
            <person name="Lajoix A."/>
            <person name="Monterrat C."/>
            <person name="Coudert L."/>
            <person name="Schmitter J.M."/>
            <person name="Ochoa B."/>
            <person name="Lang J."/>
        </authorList>
    </citation>
    <scope>INTERACTION WITH AGO2 AND SND1</scope>
</reference>
<reference key="4">
    <citation type="journal article" date="2016" name="EMBO Rep.">
        <title>Synaptotagmin-11 inhibits clathrin-mediated and bulk endocytosis.</title>
        <authorList>
            <person name="Wang C."/>
            <person name="Wang Y."/>
            <person name="Hu M."/>
            <person name="Chai Z."/>
            <person name="Wu Q."/>
            <person name="Huang R."/>
            <person name="Han W."/>
            <person name="Zhang C.X."/>
            <person name="Zhou Z."/>
        </authorList>
    </citation>
    <scope>FUNCTION</scope>
    <scope>SUBCELLULAR LOCATION</scope>
    <scope>DOMAIN</scope>
    <scope>MUTAGENESIS OF 345-LYS-LYS-346</scope>
</reference>
<reference key="5">
    <citation type="journal article" date="2018" name="Nat. Commun.">
        <title>Synaptotagmin-11 is a critical mediator of parkin-linked neurotoxicity and Parkinson's disease-like pathology.</title>
        <authorList>
            <person name="Wang C."/>
            <person name="Kang X."/>
            <person name="Zhou L."/>
            <person name="Chai Z."/>
            <person name="Wu Q."/>
            <person name="Huang R."/>
            <person name="Xu H."/>
            <person name="Hu M."/>
            <person name="Sun X."/>
            <person name="Sun S."/>
            <person name="Li J."/>
            <person name="Jiao R."/>
            <person name="Zuo P."/>
            <person name="Zheng L."/>
            <person name="Yue Z."/>
            <person name="Zhou Z."/>
        </authorList>
    </citation>
    <scope>UBIQUITINATED</scope>
    <scope>DOMAIN</scope>
    <scope>FUNCTION</scope>
</reference>
<reference key="6">
    <citation type="journal article" date="2018" name="Cell Rep.">
        <title>Regulation of KIF1A-Driven Dense Core Vesicle Transport: Ca2+/CaM Controls DCV Binding and Liprin-alpha/TANC2 Recruits DCVs to Postsynaptic Sites.</title>
        <authorList>
            <person name="Stucchi R."/>
            <person name="Plucinska G."/>
            <person name="Hummel J.J.A."/>
            <person name="Zahavi E.E."/>
            <person name="Guerra San Juan I."/>
            <person name="Klykov O."/>
            <person name="Scheltema R.A."/>
            <person name="Altelaar A.F.M."/>
            <person name="Hoogenraad C.C."/>
        </authorList>
    </citation>
    <scope>INTERACTION WITH KIF1A</scope>
</reference>
<feature type="chain" id="PRO_0000183971" description="Synaptotagmin-11">
    <location>
        <begin position="1"/>
        <end position="430"/>
    </location>
</feature>
<feature type="topological domain" description="Vesicular" evidence="3">
    <location>
        <begin position="1"/>
        <end position="15"/>
    </location>
</feature>
<feature type="transmembrane region" description="Helical" evidence="3">
    <location>
        <begin position="16"/>
        <end position="36"/>
    </location>
</feature>
<feature type="topological domain" description="Cytoplasmic" evidence="3">
    <location>
        <begin position="37"/>
        <end position="430"/>
    </location>
</feature>
<feature type="domain" description="C2 1" evidence="4">
    <location>
        <begin position="156"/>
        <end position="278"/>
    </location>
</feature>
<feature type="domain" description="C2 2" evidence="4">
    <location>
        <begin position="290"/>
        <end position="425"/>
    </location>
</feature>
<feature type="region of interest" description="Disordered" evidence="5">
    <location>
        <begin position="132"/>
        <end position="154"/>
    </location>
</feature>
<feature type="compositionally biased region" description="Low complexity" evidence="5">
    <location>
        <begin position="140"/>
        <end position="150"/>
    </location>
</feature>
<feature type="binding site" evidence="4">
    <location>
        <position position="249"/>
    </location>
    <ligand>
        <name>Ca(2+)</name>
        <dbReference type="ChEBI" id="CHEBI:29108"/>
    </ligand>
</feature>
<feature type="binding site" evidence="4">
    <location>
        <position position="252"/>
    </location>
    <ligand>
        <name>Ca(2+)</name>
        <dbReference type="ChEBI" id="CHEBI:29108"/>
    </ligand>
</feature>
<feature type="binding site" evidence="4">
    <location>
        <position position="255"/>
    </location>
    <ligand>
        <name>Ca(2+)</name>
        <dbReference type="ChEBI" id="CHEBI:29108"/>
    </ligand>
</feature>
<feature type="modified residue" description="Phosphoserine" evidence="2">
    <location>
        <position position="133"/>
    </location>
</feature>
<feature type="mutagenesis site" description="Restores Ca(2+)-binding and Ca(2+)-dependent phospholipid binding." evidence="10">
    <original>S</original>
    <variation>D</variation>
    <location>
        <position position="247"/>
    </location>
</feature>
<feature type="mutagenesis site" description="Loss of inhibition of clathrin-mediated and bulk endocytosis." evidence="7">
    <original>KK</original>
    <variation>AA</variation>
    <location>
        <begin position="345"/>
        <end position="346"/>
    </location>
</feature>
<feature type="sequence conflict" description="In Ref. 1; AAB58344." evidence="11" ref="1">
    <original>K</original>
    <variation>E</variation>
    <location>
        <position position="74"/>
    </location>
</feature>
<organism>
    <name type="scientific">Rattus norvegicus</name>
    <name type="common">Rat</name>
    <dbReference type="NCBI Taxonomy" id="10116"/>
    <lineage>
        <taxon>Eukaryota</taxon>
        <taxon>Metazoa</taxon>
        <taxon>Chordata</taxon>
        <taxon>Craniata</taxon>
        <taxon>Vertebrata</taxon>
        <taxon>Euteleostomi</taxon>
        <taxon>Mammalia</taxon>
        <taxon>Eutheria</taxon>
        <taxon>Euarchontoglires</taxon>
        <taxon>Glires</taxon>
        <taxon>Rodentia</taxon>
        <taxon>Myomorpha</taxon>
        <taxon>Muroidea</taxon>
        <taxon>Muridae</taxon>
        <taxon>Murinae</taxon>
        <taxon>Rattus</taxon>
    </lineage>
</organism>
<keyword id="KW-0106">Calcium</keyword>
<keyword id="KW-0966">Cell projection</keyword>
<keyword id="KW-0968">Cytoplasmic vesicle</keyword>
<keyword id="KW-0967">Endosome</keyword>
<keyword id="KW-0333">Golgi apparatus</keyword>
<keyword id="KW-0458">Lysosome</keyword>
<keyword id="KW-0472">Membrane</keyword>
<keyword id="KW-0479">Metal-binding</keyword>
<keyword id="KW-0597">Phosphoprotein</keyword>
<keyword id="KW-1185">Reference proteome</keyword>
<keyword id="KW-0677">Repeat</keyword>
<keyword id="KW-0770">Synapse</keyword>
<keyword id="KW-0812">Transmembrane</keyword>
<keyword id="KW-1133">Transmembrane helix</keyword>
<keyword id="KW-0832">Ubl conjugation</keyword>
<accession>O08835</accession>
<accession>Q925B6</accession>
<proteinExistence type="evidence at protein level"/>
<name>SYT11_RAT</name>
<evidence type="ECO:0000250" key="1">
    <source>
        <dbReference type="UniProtKB" id="Q9BT88"/>
    </source>
</evidence>
<evidence type="ECO:0000250" key="2">
    <source>
        <dbReference type="UniProtKB" id="Q9R0N3"/>
    </source>
</evidence>
<evidence type="ECO:0000255" key="3"/>
<evidence type="ECO:0000255" key="4">
    <source>
        <dbReference type="PROSITE-ProRule" id="PRU00041"/>
    </source>
</evidence>
<evidence type="ECO:0000256" key="5">
    <source>
        <dbReference type="SAM" id="MobiDB-lite"/>
    </source>
</evidence>
<evidence type="ECO:0000269" key="6">
    <source>
    </source>
</evidence>
<evidence type="ECO:0000269" key="7">
    <source>
    </source>
</evidence>
<evidence type="ECO:0000269" key="8">
    <source>
    </source>
</evidence>
<evidence type="ECO:0000269" key="9">
    <source>
    </source>
</evidence>
<evidence type="ECO:0000269" key="10">
    <source>
    </source>
</evidence>
<evidence type="ECO:0000305" key="11"/>
<evidence type="ECO:0000312" key="12">
    <source>
        <dbReference type="RGD" id="62042"/>
    </source>
</evidence>
<sequence>MAEITNIRPSFDVSPVAAGLIGASVLVVCVSVTVFVWTCCHQQAEKKHKTPPYKFIHMLKGISIYPETLSNKKKIIKVRRDKDGSHRESGRGNLLVNAESGLLSHDRDPRGPSPASCIDQLPIKRDYGEELRSPMTSLTPGESKPTSPSSPEEDVMLGSLTFSVDYNFPKKALVVTIQEAHGLPVMDGQTQGSDPYIKMTILPDKRHRVKTRVLRKTLDPVFDETFTFYGIPYSQLQDLVLHFLVLSFDRFSRDDVIGEVMVPLAGVDPSTGKVQLTRDIIKRNIQKCISRGELQVSLSYQPVAQRMTVVVLKARHLPKMDITGLSGNPYVKVNVYYGRKRIAKKKTHVKKCTLNPIFNESFIYDIPTDLLPDISIEFLVIDFDRTTKNEVVGRLILGAHSVTTSGAEHWREVCESPRKPVAKWHSLSEY</sequence>
<dbReference type="EMBL" id="AF000423">
    <property type="protein sequence ID" value="AAB58344.1"/>
    <property type="molecule type" value="mRNA"/>
</dbReference>
<dbReference type="EMBL" id="AF375465">
    <property type="protein sequence ID" value="AAK56960.1"/>
    <property type="molecule type" value="mRNA"/>
</dbReference>
<dbReference type="RefSeq" id="XP_006232810.1">
    <property type="nucleotide sequence ID" value="XM_006232748.3"/>
</dbReference>
<dbReference type="SMR" id="O08835"/>
<dbReference type="BioGRID" id="248858">
    <property type="interactions" value="1"/>
</dbReference>
<dbReference type="FunCoup" id="O08835">
    <property type="interactions" value="2300"/>
</dbReference>
<dbReference type="STRING" id="10116.ENSRNOP00000027474"/>
<dbReference type="iPTMnet" id="O08835"/>
<dbReference type="PhosphoSitePlus" id="O08835"/>
<dbReference type="PaxDb" id="10116-ENSRNOP00000027474"/>
<dbReference type="GeneID" id="60568"/>
<dbReference type="UCSC" id="RGD:62042">
    <property type="organism name" value="rat"/>
</dbReference>
<dbReference type="AGR" id="RGD:62042"/>
<dbReference type="CTD" id="23208"/>
<dbReference type="RGD" id="62042">
    <property type="gene designation" value="Syt11"/>
</dbReference>
<dbReference type="VEuPathDB" id="HostDB:ENSRNOG00000020279"/>
<dbReference type="eggNOG" id="KOG1028">
    <property type="taxonomic scope" value="Eukaryota"/>
</dbReference>
<dbReference type="HOGENOM" id="CLU_023008_7_3_1"/>
<dbReference type="InParanoid" id="O08835"/>
<dbReference type="OrthoDB" id="38138at9989"/>
<dbReference type="PhylomeDB" id="O08835"/>
<dbReference type="Reactome" id="R-RNO-8856825">
    <property type="pathway name" value="Cargo recognition for clathrin-mediated endocytosis"/>
</dbReference>
<dbReference type="Reactome" id="R-RNO-8856828">
    <property type="pathway name" value="Clathrin-mediated endocytosis"/>
</dbReference>
<dbReference type="PRO" id="PR:O08835"/>
<dbReference type="Proteomes" id="UP000002494">
    <property type="component" value="Chromosome 2"/>
</dbReference>
<dbReference type="Bgee" id="ENSRNOG00000020279">
    <property type="expression patterns" value="Expressed in frontal cortex and 20 other cell types or tissues"/>
</dbReference>
<dbReference type="GO" id="GO:0030424">
    <property type="term" value="C:axon"/>
    <property type="evidence" value="ECO:0000314"/>
    <property type="project" value="ParkinsonsUK-UCL"/>
</dbReference>
<dbReference type="GO" id="GO:0044297">
    <property type="term" value="C:cell body"/>
    <property type="evidence" value="ECO:0000314"/>
    <property type="project" value="ParkinsonsUK-UCL"/>
</dbReference>
<dbReference type="GO" id="GO:0030665">
    <property type="term" value="C:clathrin-coated vesicle membrane"/>
    <property type="evidence" value="ECO:0007669"/>
    <property type="project" value="UniProtKB-SubCell"/>
</dbReference>
<dbReference type="GO" id="GO:0005737">
    <property type="term" value="C:cytoplasm"/>
    <property type="evidence" value="ECO:0000266"/>
    <property type="project" value="RGD"/>
</dbReference>
<dbReference type="GO" id="GO:0030425">
    <property type="term" value="C:dendrite"/>
    <property type="evidence" value="ECO:0000250"/>
    <property type="project" value="UniProtKB"/>
</dbReference>
<dbReference type="GO" id="GO:0043197">
    <property type="term" value="C:dendritic spine"/>
    <property type="evidence" value="ECO:0000314"/>
    <property type="project" value="ParkinsonsUK-UCL"/>
</dbReference>
<dbReference type="GO" id="GO:0098691">
    <property type="term" value="C:dopaminergic synapse"/>
    <property type="evidence" value="ECO:0000266"/>
    <property type="project" value="RGD"/>
</dbReference>
<dbReference type="GO" id="GO:0032009">
    <property type="term" value="C:early phagosome"/>
    <property type="evidence" value="ECO:0000250"/>
    <property type="project" value="UniProtKB"/>
</dbReference>
<dbReference type="GO" id="GO:0060076">
    <property type="term" value="C:excitatory synapse"/>
    <property type="evidence" value="ECO:0000314"/>
    <property type="project" value="ParkinsonsUK-UCL"/>
</dbReference>
<dbReference type="GO" id="GO:0070382">
    <property type="term" value="C:exocytic vesicle"/>
    <property type="evidence" value="ECO:0000318"/>
    <property type="project" value="GO_Central"/>
</dbReference>
<dbReference type="GO" id="GO:0060077">
    <property type="term" value="C:inhibitory synapse"/>
    <property type="evidence" value="ECO:0000314"/>
    <property type="project" value="ParkinsonsUK-UCL"/>
</dbReference>
<dbReference type="GO" id="GO:0005765">
    <property type="term" value="C:lysosomal membrane"/>
    <property type="evidence" value="ECO:0007669"/>
    <property type="project" value="UniProtKB-SubCell"/>
</dbReference>
<dbReference type="GO" id="GO:0005764">
    <property type="term" value="C:lysosome"/>
    <property type="evidence" value="ECO:0000250"/>
    <property type="project" value="UniProtKB"/>
</dbReference>
<dbReference type="GO" id="GO:0043005">
    <property type="term" value="C:neuron projection"/>
    <property type="evidence" value="ECO:0000314"/>
    <property type="project" value="ParkinsonsUK-UCL"/>
</dbReference>
<dbReference type="GO" id="GO:0043204">
    <property type="term" value="C:perikaryon"/>
    <property type="evidence" value="ECO:0007669"/>
    <property type="project" value="UniProtKB-SubCell"/>
</dbReference>
<dbReference type="GO" id="GO:0048471">
    <property type="term" value="C:perinuclear region of cytoplasm"/>
    <property type="evidence" value="ECO:0000314"/>
    <property type="project" value="ParkinsonsUK-UCL"/>
</dbReference>
<dbReference type="GO" id="GO:0001891">
    <property type="term" value="C:phagocytic cup"/>
    <property type="evidence" value="ECO:0000266"/>
    <property type="project" value="RGD"/>
</dbReference>
<dbReference type="GO" id="GO:0045335">
    <property type="term" value="C:phagocytic vesicle"/>
    <property type="evidence" value="ECO:0000266"/>
    <property type="project" value="RGD"/>
</dbReference>
<dbReference type="GO" id="GO:0005886">
    <property type="term" value="C:plasma membrane"/>
    <property type="evidence" value="ECO:0000266"/>
    <property type="project" value="RGD"/>
</dbReference>
<dbReference type="GO" id="GO:0098794">
    <property type="term" value="C:postsynapse"/>
    <property type="evidence" value="ECO:0000314"/>
    <property type="project" value="SynGO"/>
</dbReference>
<dbReference type="GO" id="GO:0014069">
    <property type="term" value="C:postsynaptic density"/>
    <property type="evidence" value="ECO:0000314"/>
    <property type="project" value="ParkinsonsUK-UCL"/>
</dbReference>
<dbReference type="GO" id="GO:0098793">
    <property type="term" value="C:presynapse"/>
    <property type="evidence" value="ECO:0000314"/>
    <property type="project" value="ParkinsonsUK-UCL"/>
</dbReference>
<dbReference type="GO" id="GO:0048787">
    <property type="term" value="C:presynaptic active zone membrane"/>
    <property type="evidence" value="ECO:0000314"/>
    <property type="project" value="ParkinsonsUK-UCL"/>
</dbReference>
<dbReference type="GO" id="GO:0055037">
    <property type="term" value="C:recycling endosome"/>
    <property type="evidence" value="ECO:0000250"/>
    <property type="project" value="UniProtKB"/>
</dbReference>
<dbReference type="GO" id="GO:0055038">
    <property type="term" value="C:recycling endosome membrane"/>
    <property type="evidence" value="ECO:0007669"/>
    <property type="project" value="UniProtKB-SubCell"/>
</dbReference>
<dbReference type="GO" id="GO:0098685">
    <property type="term" value="C:Schaffer collateral - CA1 synapse"/>
    <property type="evidence" value="ECO:0000314"/>
    <property type="project" value="SynGO"/>
</dbReference>
<dbReference type="GO" id="GO:0045202">
    <property type="term" value="C:synapse"/>
    <property type="evidence" value="ECO:0000318"/>
    <property type="project" value="GO_Central"/>
</dbReference>
<dbReference type="GO" id="GO:0008021">
    <property type="term" value="C:synaptic vesicle"/>
    <property type="evidence" value="ECO:0000314"/>
    <property type="project" value="ParkinsonsUK-UCL"/>
</dbReference>
<dbReference type="GO" id="GO:0030672">
    <property type="term" value="C:synaptic vesicle membrane"/>
    <property type="evidence" value="ECO:0000314"/>
    <property type="project" value="SynGO"/>
</dbReference>
<dbReference type="GO" id="GO:0043195">
    <property type="term" value="C:terminal bouton"/>
    <property type="evidence" value="ECO:0000314"/>
    <property type="project" value="ParkinsonsUK-UCL"/>
</dbReference>
<dbReference type="GO" id="GO:0005802">
    <property type="term" value="C:trans-Golgi network"/>
    <property type="evidence" value="ECO:0000250"/>
    <property type="project" value="UniProtKB"/>
</dbReference>
<dbReference type="GO" id="GO:0031982">
    <property type="term" value="C:vesicle"/>
    <property type="evidence" value="ECO:0000314"/>
    <property type="project" value="ParkinsonsUK-UCL"/>
</dbReference>
<dbReference type="GO" id="GO:0048487">
    <property type="term" value="F:beta-tubulin binding"/>
    <property type="evidence" value="ECO:0000266"/>
    <property type="project" value="RGD"/>
</dbReference>
<dbReference type="GO" id="GO:0061891">
    <property type="term" value="F:calcium ion sensor activity"/>
    <property type="evidence" value="ECO:0000318"/>
    <property type="project" value="GO_Central"/>
</dbReference>
<dbReference type="GO" id="GO:0042802">
    <property type="term" value="F:identical protein binding"/>
    <property type="evidence" value="ECO:0000266"/>
    <property type="project" value="RGD"/>
</dbReference>
<dbReference type="GO" id="GO:0046872">
    <property type="term" value="F:metal ion binding"/>
    <property type="evidence" value="ECO:0007669"/>
    <property type="project" value="UniProtKB-KW"/>
</dbReference>
<dbReference type="GO" id="GO:0000149">
    <property type="term" value="F:SNARE binding"/>
    <property type="evidence" value="ECO:0000266"/>
    <property type="project" value="RGD"/>
</dbReference>
<dbReference type="GO" id="GO:0031369">
    <property type="term" value="F:translation initiation factor binding"/>
    <property type="evidence" value="ECO:0000266"/>
    <property type="project" value="RGD"/>
</dbReference>
<dbReference type="GO" id="GO:0031625">
    <property type="term" value="F:ubiquitin protein ligase binding"/>
    <property type="evidence" value="ECO:0000266"/>
    <property type="project" value="RGD"/>
</dbReference>
<dbReference type="GO" id="GO:0006914">
    <property type="term" value="P:autophagy"/>
    <property type="evidence" value="ECO:0000250"/>
    <property type="project" value="UniProtKB"/>
</dbReference>
<dbReference type="GO" id="GO:1990927">
    <property type="term" value="P:calcium ion regulated lysosome exocytosis"/>
    <property type="evidence" value="ECO:0000266"/>
    <property type="project" value="RGD"/>
</dbReference>
<dbReference type="GO" id="GO:0099502">
    <property type="term" value="P:calcium-dependent activation of synaptic vesicle fusion"/>
    <property type="evidence" value="ECO:0000318"/>
    <property type="project" value="GO_Central"/>
</dbReference>
<dbReference type="GO" id="GO:0051650">
    <property type="term" value="P:establishment of vesicle localization"/>
    <property type="evidence" value="ECO:0000250"/>
    <property type="project" value="UniProtKB"/>
</dbReference>
<dbReference type="GO" id="GO:0007612">
    <property type="term" value="P:learning"/>
    <property type="evidence" value="ECO:0000250"/>
    <property type="project" value="UniProtKB"/>
</dbReference>
<dbReference type="GO" id="GO:0007613">
    <property type="term" value="P:memory"/>
    <property type="evidence" value="ECO:0000250"/>
    <property type="project" value="UniProtKB"/>
</dbReference>
<dbReference type="GO" id="GO:1905444">
    <property type="term" value="P:negative regulation of clathrin coat assembly"/>
    <property type="evidence" value="ECO:0000315"/>
    <property type="project" value="ParkinsonsUK-UCL"/>
</dbReference>
<dbReference type="GO" id="GO:1900186">
    <property type="term" value="P:negative regulation of clathrin-dependent endocytosis"/>
    <property type="evidence" value="ECO:0000315"/>
    <property type="project" value="ParkinsonsUK-UCL"/>
</dbReference>
<dbReference type="GO" id="GO:0001818">
    <property type="term" value="P:negative regulation of cytokine production"/>
    <property type="evidence" value="ECO:0000250"/>
    <property type="project" value="UniProtKB"/>
</dbReference>
<dbReference type="GO" id="GO:0033602">
    <property type="term" value="P:negative regulation of dopamine secretion"/>
    <property type="evidence" value="ECO:0000314"/>
    <property type="project" value="UniProtKB"/>
</dbReference>
<dbReference type="GO" id="GO:0045806">
    <property type="term" value="P:negative regulation of endocytosis"/>
    <property type="evidence" value="ECO:0000314"/>
    <property type="project" value="UniProtKB"/>
</dbReference>
<dbReference type="GO" id="GO:0032715">
    <property type="term" value="P:negative regulation of interleukin-6 production"/>
    <property type="evidence" value="ECO:0000250"/>
    <property type="project" value="UniProtKB"/>
</dbReference>
<dbReference type="GO" id="GO:1905154">
    <property type="term" value="P:negative regulation of membrane invagination"/>
    <property type="evidence" value="ECO:0000315"/>
    <property type="project" value="ParkinsonsUK-UCL"/>
</dbReference>
<dbReference type="GO" id="GO:1903979">
    <property type="term" value="P:negative regulation of microglial cell activation"/>
    <property type="evidence" value="ECO:0000250"/>
    <property type="project" value="UniProtKB"/>
</dbReference>
<dbReference type="GO" id="GO:0050765">
    <property type="term" value="P:negative regulation of phagocytosis"/>
    <property type="evidence" value="ECO:0000250"/>
    <property type="project" value="UniProtKB"/>
</dbReference>
<dbReference type="GO" id="GO:1900243">
    <property type="term" value="P:negative regulation of synaptic vesicle endocytosis"/>
    <property type="evidence" value="ECO:0000315"/>
    <property type="project" value="ParkinsonsUK-UCL"/>
</dbReference>
<dbReference type="GO" id="GO:0032720">
    <property type="term" value="P:negative regulation of tumor necrosis factor production"/>
    <property type="evidence" value="ECO:0000250"/>
    <property type="project" value="UniProtKB"/>
</dbReference>
<dbReference type="GO" id="GO:0001778">
    <property type="term" value="P:plasma membrane repair"/>
    <property type="evidence" value="ECO:0000266"/>
    <property type="project" value="RGD"/>
</dbReference>
<dbReference type="GO" id="GO:1905171">
    <property type="term" value="P:positive regulation of protein localization to phagocytic vesicle"/>
    <property type="evidence" value="ECO:0000266"/>
    <property type="project" value="RGD"/>
</dbReference>
<dbReference type="GO" id="GO:0017158">
    <property type="term" value="P:regulation of calcium ion-dependent exocytosis"/>
    <property type="evidence" value="ECO:0000318"/>
    <property type="project" value="GO_Central"/>
</dbReference>
<dbReference type="GO" id="GO:1900424">
    <property type="term" value="P:regulation of defense response to bacterium"/>
    <property type="evidence" value="ECO:0000266"/>
    <property type="project" value="RGD"/>
</dbReference>
<dbReference type="GO" id="GO:1900242">
    <property type="term" value="P:regulation of synaptic vesicle endocytosis"/>
    <property type="evidence" value="ECO:0000266"/>
    <property type="project" value="RGD"/>
</dbReference>
<dbReference type="GO" id="GO:0009611">
    <property type="term" value="P:response to wounding"/>
    <property type="evidence" value="ECO:0000266"/>
    <property type="project" value="RGD"/>
</dbReference>
<dbReference type="GO" id="GO:0006906">
    <property type="term" value="P:vesicle fusion"/>
    <property type="evidence" value="ECO:0000318"/>
    <property type="project" value="GO_Central"/>
</dbReference>
<dbReference type="GO" id="GO:0016192">
    <property type="term" value="P:vesicle-mediated transport"/>
    <property type="evidence" value="ECO:0000318"/>
    <property type="project" value="GO_Central"/>
</dbReference>
<dbReference type="CDD" id="cd08388">
    <property type="entry name" value="C2A_Synaptotagmin-4-11"/>
    <property type="match status" value="1"/>
</dbReference>
<dbReference type="CDD" id="cd08404">
    <property type="entry name" value="C2B_Synaptotagmin-4"/>
    <property type="match status" value="1"/>
</dbReference>
<dbReference type="FunFam" id="2.60.40.150:FF:000039">
    <property type="entry name" value="Synaptotagmin 11"/>
    <property type="match status" value="1"/>
</dbReference>
<dbReference type="FunFam" id="2.60.40.150:FF:000051">
    <property type="entry name" value="Synaptotagmin 11"/>
    <property type="match status" value="1"/>
</dbReference>
<dbReference type="Gene3D" id="2.60.40.150">
    <property type="entry name" value="C2 domain"/>
    <property type="match status" value="2"/>
</dbReference>
<dbReference type="InterPro" id="IPR000008">
    <property type="entry name" value="C2_dom"/>
</dbReference>
<dbReference type="InterPro" id="IPR035892">
    <property type="entry name" value="C2_domain_sf"/>
</dbReference>
<dbReference type="InterPro" id="IPR001565">
    <property type="entry name" value="Synaptotagmin"/>
</dbReference>
<dbReference type="PANTHER" id="PTHR10024">
    <property type="entry name" value="SYNAPTOTAGMIN"/>
    <property type="match status" value="1"/>
</dbReference>
<dbReference type="PANTHER" id="PTHR10024:SF115">
    <property type="entry name" value="SYNAPTOTAGMIN-11"/>
    <property type="match status" value="1"/>
</dbReference>
<dbReference type="Pfam" id="PF00168">
    <property type="entry name" value="C2"/>
    <property type="match status" value="2"/>
</dbReference>
<dbReference type="PRINTS" id="PR00399">
    <property type="entry name" value="SYNAPTOTAGMN"/>
</dbReference>
<dbReference type="SMART" id="SM00239">
    <property type="entry name" value="C2"/>
    <property type="match status" value="2"/>
</dbReference>
<dbReference type="SUPFAM" id="SSF49562">
    <property type="entry name" value="C2 domain (Calcium/lipid-binding domain, CaLB)"/>
    <property type="match status" value="2"/>
</dbReference>
<dbReference type="PROSITE" id="PS50004">
    <property type="entry name" value="C2"/>
    <property type="match status" value="2"/>
</dbReference>
<protein>
    <recommendedName>
        <fullName evidence="11">Synaptotagmin-11</fullName>
    </recommendedName>
    <alternativeName>
        <fullName>Synaptotagmin XI</fullName>
        <shortName>SytXI</shortName>
    </alternativeName>
</protein>